<evidence type="ECO:0000255" key="1"/>
<evidence type="ECO:0000255" key="2">
    <source>
        <dbReference type="PROSITE-ProRule" id="PRU00498"/>
    </source>
</evidence>
<evidence type="ECO:0000255" key="3">
    <source>
        <dbReference type="PROSITE-ProRule" id="PRU00597"/>
    </source>
</evidence>
<evidence type="ECO:0000256" key="4">
    <source>
        <dbReference type="SAM" id="MobiDB-lite"/>
    </source>
</evidence>
<evidence type="ECO:0000269" key="5">
    <source>
    </source>
</evidence>
<evidence type="ECO:0000269" key="6">
    <source>
    </source>
</evidence>
<evidence type="ECO:0000269" key="7">
    <source>
    </source>
</evidence>
<evidence type="ECO:0000269" key="8">
    <source>
    </source>
</evidence>
<evidence type="ECO:0000269" key="9">
    <source>
    </source>
</evidence>
<evidence type="ECO:0000269" key="10">
    <source>
    </source>
</evidence>
<evidence type="ECO:0000303" key="11">
    <source>
    </source>
</evidence>
<evidence type="ECO:0000303" key="12">
    <source>
    </source>
</evidence>
<evidence type="ECO:0000305" key="13"/>
<evidence type="ECO:0007744" key="14">
    <source>
        <dbReference type="PDB" id="6JT5"/>
    </source>
</evidence>
<evidence type="ECO:0007744" key="15">
    <source>
        <dbReference type="PDB" id="6JT6"/>
    </source>
</evidence>
<evidence type="ECO:0007744" key="16">
    <source>
        <dbReference type="PDB" id="6JWF"/>
    </source>
</evidence>
<evidence type="ECO:0007829" key="17">
    <source>
        <dbReference type="PDB" id="6JT5"/>
    </source>
</evidence>
<evidence type="ECO:0007829" key="18">
    <source>
        <dbReference type="PDB" id="6JT6"/>
    </source>
</evidence>
<evidence type="ECO:0007829" key="19">
    <source>
        <dbReference type="PDB" id="6JWF"/>
    </source>
</evidence>
<proteinExistence type="evidence at protein level"/>
<sequence length="726" mass="78379">MRSSSLAWALGLVALANAQGSPTQWYDSITGVTFSRFYQQDTDASWGYIFPSASGGQAPDEFIGLFQGPASAGWIGNSLGGSMRNNPLLVGWVDGSTPRISARWATDYAPPSIYSGPRLTILGSSGTNGNIQRIVYRCQNCTRWTGGAGGIPTTGSAVFGWAFHSTTKPLTPSDPSSGLYRHSHAAQYGFDIGNARTTLYDYYLQQLTNAPPLSGGAPTQPPTQQPPTTTAPPPPPPSSTFVSCPGAPQPRYQMNVANGFRVAPVLGGLTMPRGITLDTRGNLLVVERGRGLTGHTLDANGCVTSSKVVIQDTQINHGIDVHPSGRRIIASSGDIAWSWDYDPATMTATNRRTLVTGMNNFYHFTRTVHISRKYPNLFALNVGSDGNIDVPTRQQNSGRAQIRVFDYDQLPQNGVPFVSQYGRVLGYGLRNDVGITEDRAGNIHSIENSLDNAYRMVNGQRRDIHTNNPAEKVYNLGDPSNPRAIFGGYPDCYTVWEPSDFTDSPKQPGDWFTQDNSGQYTDAWCNANAVKPTLLLPPHTAPLDMKFGLGNDTNLYVALHGSWNRQPPQGYKVVVVPGQYSASGEWSPTAPLAQSRTAWSDLLTNRNENQCSGFGNANCFRPVGLVWSADGQNLYVSSDTSGEVFIIKRMSGPIVQPPITQPPITTSPPTPTTPPVVQPPTTVAPPQASQTLWGQCGGQGWTGPTLCPANSVCRESNQWYSQCVPA</sequence>
<accession>A8P0V4</accession>
<feature type="signal peptide" evidence="1">
    <location>
        <begin position="1"/>
        <end position="18"/>
    </location>
</feature>
<feature type="chain" id="PRO_5002726695" description="Pyrroloquinoline quinone-dependent pyranose dehydrogenase">
    <location>
        <begin position="19"/>
        <end position="726"/>
    </location>
</feature>
<feature type="domain" description="CBM1" evidence="3">
    <location>
        <begin position="688"/>
        <end position="724"/>
    </location>
</feature>
<feature type="region of interest" description="Disordered" evidence="4">
    <location>
        <begin position="211"/>
        <end position="242"/>
    </location>
</feature>
<feature type="region of interest" description="Disordered" evidence="4">
    <location>
        <begin position="659"/>
        <end position="689"/>
    </location>
</feature>
<feature type="compositionally biased region" description="Pro residues" evidence="4">
    <location>
        <begin position="219"/>
        <end position="238"/>
    </location>
</feature>
<feature type="compositionally biased region" description="Pro residues" evidence="4">
    <location>
        <begin position="659"/>
        <end position="678"/>
    </location>
</feature>
<feature type="compositionally biased region" description="Low complexity" evidence="4">
    <location>
        <begin position="679"/>
        <end position="689"/>
    </location>
</feature>
<feature type="binding site" description="axial binding residue" evidence="9 15">
    <location>
        <position position="83"/>
    </location>
    <ligand>
        <name>heme b</name>
        <dbReference type="ChEBI" id="CHEBI:60344"/>
    </ligand>
    <ligandPart>
        <name>Fe</name>
        <dbReference type="ChEBI" id="CHEBI:18248"/>
    </ligandPart>
</feature>
<feature type="binding site" evidence="9 15">
    <location>
        <position position="108"/>
    </location>
    <ligand>
        <name>heme b</name>
        <dbReference type="ChEBI" id="CHEBI:60344"/>
    </ligand>
</feature>
<feature type="binding site" evidence="9 15">
    <location>
        <position position="181"/>
    </location>
    <ligand>
        <name>heme b</name>
        <dbReference type="ChEBI" id="CHEBI:60344"/>
    </ligand>
</feature>
<feature type="binding site" description="axial binding residue" evidence="9 15">
    <location>
        <position position="182"/>
    </location>
    <ligand>
        <name>heme b</name>
        <dbReference type="ChEBI" id="CHEBI:60344"/>
    </ligand>
    <ligandPart>
        <name>Fe</name>
        <dbReference type="ChEBI" id="CHEBI:18248"/>
    </ligandPart>
</feature>
<feature type="binding site" evidence="9 16">
    <location>
        <position position="273"/>
    </location>
    <ligand>
        <name>pyrroloquinoline quinone</name>
        <dbReference type="ChEBI" id="CHEBI:58442"/>
    </ligand>
</feature>
<feature type="binding site" evidence="9 16">
    <location>
        <position position="363"/>
    </location>
    <ligand>
        <name>pyrroloquinoline quinone</name>
        <dbReference type="ChEBI" id="CHEBI:58442"/>
    </ligand>
</feature>
<feature type="binding site" evidence="9 16">
    <location>
        <position position="430"/>
    </location>
    <ligand>
        <name>pyrroloquinoline quinone</name>
        <dbReference type="ChEBI" id="CHEBI:58442"/>
    </ligand>
</feature>
<feature type="binding site" evidence="9 16">
    <location>
        <position position="431"/>
    </location>
    <ligand>
        <name>pyrroloquinoline quinone</name>
        <dbReference type="ChEBI" id="CHEBI:58442"/>
    </ligand>
</feature>
<feature type="binding site" evidence="9 14 16">
    <location>
        <position position="449"/>
    </location>
    <ligand>
        <name>Ca(2+)</name>
        <dbReference type="ChEBI" id="CHEBI:29108"/>
    </ligand>
</feature>
<feature type="binding site" evidence="9 14 16">
    <location>
        <position position="451"/>
    </location>
    <ligand>
        <name>Ca(2+)</name>
        <dbReference type="ChEBI" id="CHEBI:29108"/>
    </ligand>
</feature>
<feature type="binding site" evidence="9 16">
    <location>
        <position position="539"/>
    </location>
    <ligand>
        <name>pyrroloquinoline quinone</name>
        <dbReference type="ChEBI" id="CHEBI:58442"/>
    </ligand>
</feature>
<feature type="binding site" evidence="9 16">
    <location>
        <position position="560"/>
    </location>
    <ligand>
        <name>pyrroloquinoline quinone</name>
        <dbReference type="ChEBI" id="CHEBI:58442"/>
    </ligand>
</feature>
<feature type="binding site" evidence="9 16">
    <location>
        <position position="563"/>
    </location>
    <ligand>
        <name>pyrroloquinoline quinone</name>
        <dbReference type="ChEBI" id="CHEBI:58442"/>
    </ligand>
</feature>
<feature type="binding site" evidence="9 16">
    <location>
        <position position="564"/>
    </location>
    <ligand>
        <name>pyrroloquinoline quinone</name>
        <dbReference type="ChEBI" id="CHEBI:58442"/>
    </ligand>
</feature>
<feature type="binding site" evidence="9 16">
    <location>
        <position position="621"/>
    </location>
    <ligand>
        <name>pyrroloquinoline quinone</name>
        <dbReference type="ChEBI" id="CHEBI:58442"/>
    </ligand>
</feature>
<feature type="glycosylation site" description="N-linked (GlcNAc...) asparagine" evidence="2 9 15">
    <location>
        <position position="140"/>
    </location>
</feature>
<feature type="glycosylation site" description="N-linked (GlcNAc...) asparagine" evidence="2 9 14 16">
    <location>
        <position position="551"/>
    </location>
</feature>
<feature type="disulfide bond" evidence="9 15">
    <location>
        <begin position="138"/>
        <end position="141"/>
    </location>
</feature>
<feature type="disulfide bond" evidence="9 14 16">
    <location>
        <begin position="244"/>
        <end position="302"/>
    </location>
</feature>
<feature type="disulfide bond" evidence="9 14 16">
    <location>
        <begin position="492"/>
        <end position="525"/>
    </location>
</feature>
<feature type="disulfide bond" evidence="9 14 16">
    <location>
        <begin position="611"/>
        <end position="619"/>
    </location>
</feature>
<feature type="strand" evidence="18">
    <location>
        <begin position="23"/>
        <end position="26"/>
    </location>
</feature>
<feature type="turn" evidence="18">
    <location>
        <begin position="28"/>
        <end position="30"/>
    </location>
</feature>
<feature type="strand" evidence="18">
    <location>
        <begin position="33"/>
        <end position="39"/>
    </location>
</feature>
<feature type="turn" evidence="18">
    <location>
        <begin position="40"/>
        <end position="43"/>
    </location>
</feature>
<feature type="strand" evidence="18">
    <location>
        <begin position="44"/>
        <end position="51"/>
    </location>
</feature>
<feature type="strand" evidence="18">
    <location>
        <begin position="53"/>
        <end position="56"/>
    </location>
</feature>
<feature type="strand" evidence="18">
    <location>
        <begin position="60"/>
        <end position="69"/>
    </location>
</feature>
<feature type="strand" evidence="18">
    <location>
        <begin position="74"/>
        <end position="78"/>
    </location>
</feature>
<feature type="strand" evidence="18">
    <location>
        <begin position="81"/>
        <end position="84"/>
    </location>
</feature>
<feature type="strand" evidence="18">
    <location>
        <begin position="88"/>
        <end position="94"/>
    </location>
</feature>
<feature type="strand" evidence="18">
    <location>
        <begin position="97"/>
        <end position="109"/>
    </location>
</feature>
<feature type="strand" evidence="18">
    <location>
        <begin position="118"/>
        <end position="121"/>
    </location>
</feature>
<feature type="strand" evidence="18">
    <location>
        <begin position="129"/>
        <end position="140"/>
    </location>
</feature>
<feature type="strand" evidence="18">
    <location>
        <begin position="153"/>
        <end position="166"/>
    </location>
</feature>
<feature type="strand" evidence="18">
    <location>
        <begin position="183"/>
        <end position="192"/>
    </location>
</feature>
<feature type="helix" evidence="18">
    <location>
        <begin position="193"/>
        <end position="195"/>
    </location>
</feature>
<feature type="helix" evidence="18">
    <location>
        <begin position="200"/>
        <end position="209"/>
    </location>
</feature>
<feature type="strand" evidence="19">
    <location>
        <begin position="261"/>
        <end position="266"/>
    </location>
</feature>
<feature type="strand" evidence="19">
    <location>
        <begin position="270"/>
        <end position="277"/>
    </location>
</feature>
<feature type="strand" evidence="19">
    <location>
        <begin position="283"/>
        <end position="287"/>
    </location>
</feature>
<feature type="turn" evidence="19">
    <location>
        <begin position="288"/>
        <end position="290"/>
    </location>
</feature>
<feature type="strand" evidence="19">
    <location>
        <begin position="291"/>
        <end position="297"/>
    </location>
</feature>
<feature type="strand" evidence="19">
    <location>
        <begin position="303"/>
        <end position="311"/>
    </location>
</feature>
<feature type="strand" evidence="19">
    <location>
        <begin position="319"/>
        <end position="321"/>
    </location>
</feature>
<feature type="strand" evidence="19">
    <location>
        <begin position="325"/>
        <end position="331"/>
    </location>
</feature>
<feature type="strand" evidence="19">
    <location>
        <begin position="336"/>
        <end position="342"/>
    </location>
</feature>
<feature type="turn" evidence="19">
    <location>
        <begin position="343"/>
        <end position="346"/>
    </location>
</feature>
<feature type="strand" evidence="19">
    <location>
        <begin position="347"/>
        <end position="356"/>
    </location>
</feature>
<feature type="strand" evidence="19">
    <location>
        <begin position="361"/>
        <end position="363"/>
    </location>
</feature>
<feature type="strand" evidence="19">
    <location>
        <begin position="368"/>
        <end position="370"/>
    </location>
</feature>
<feature type="strand" evidence="19">
    <location>
        <begin position="372"/>
        <end position="374"/>
    </location>
</feature>
<feature type="strand" evidence="19">
    <location>
        <begin position="377"/>
        <end position="382"/>
    </location>
</feature>
<feature type="strand" evidence="17">
    <location>
        <begin position="385"/>
        <end position="388"/>
    </location>
</feature>
<feature type="helix" evidence="19">
    <location>
        <begin position="390"/>
        <end position="393"/>
    </location>
</feature>
<feature type="helix" evidence="19">
    <location>
        <begin position="395"/>
        <end position="397"/>
    </location>
</feature>
<feature type="strand" evidence="19">
    <location>
        <begin position="400"/>
        <end position="406"/>
    </location>
</feature>
<feature type="helix" evidence="19">
    <location>
        <begin position="407"/>
        <end position="409"/>
    </location>
</feature>
<feature type="strand" evidence="19">
    <location>
        <begin position="415"/>
        <end position="419"/>
    </location>
</feature>
<feature type="strand" evidence="19">
    <location>
        <begin position="422"/>
        <end position="428"/>
    </location>
</feature>
<feature type="strand" evidence="19">
    <location>
        <begin position="434"/>
        <end position="437"/>
    </location>
</feature>
<feature type="strand" evidence="19">
    <location>
        <begin position="443"/>
        <end position="447"/>
    </location>
</feature>
<feature type="strand" evidence="19">
    <location>
        <begin position="454"/>
        <end position="457"/>
    </location>
</feature>
<feature type="strand" evidence="19">
    <location>
        <begin position="460"/>
        <end position="463"/>
    </location>
</feature>
<feature type="strand" evidence="19">
    <location>
        <begin position="471"/>
        <end position="477"/>
    </location>
</feature>
<feature type="turn" evidence="19">
    <location>
        <begin position="489"/>
        <end position="491"/>
    </location>
</feature>
<feature type="helix" evidence="19">
    <location>
        <begin position="498"/>
        <end position="500"/>
    </location>
</feature>
<feature type="strand" evidence="19">
    <location>
        <begin position="518"/>
        <end position="520"/>
    </location>
</feature>
<feature type="helix" evidence="19">
    <location>
        <begin position="522"/>
        <end position="528"/>
    </location>
</feature>
<feature type="strand" evidence="19">
    <location>
        <begin position="533"/>
        <end position="536"/>
    </location>
</feature>
<feature type="strand" evidence="19">
    <location>
        <begin position="542"/>
        <end position="547"/>
    </location>
</feature>
<feature type="strand" evidence="19">
    <location>
        <begin position="555"/>
        <end position="559"/>
    </location>
</feature>
<feature type="strand" evidence="19">
    <location>
        <begin position="563"/>
        <end position="567"/>
    </location>
</feature>
<feature type="strand" evidence="19">
    <location>
        <begin position="572"/>
        <end position="576"/>
    </location>
</feature>
<feature type="strand" evidence="19">
    <location>
        <begin position="578"/>
        <end position="580"/>
    </location>
</feature>
<feature type="strand" evidence="19">
    <location>
        <begin position="586"/>
        <end position="590"/>
    </location>
</feature>
<feature type="helix" evidence="19">
    <location>
        <begin position="592"/>
        <end position="597"/>
    </location>
</feature>
<feature type="strand" evidence="19">
    <location>
        <begin position="600"/>
        <end position="604"/>
    </location>
</feature>
<feature type="helix" evidence="19">
    <location>
        <begin position="608"/>
        <end position="610"/>
    </location>
</feature>
<feature type="strand" evidence="17">
    <location>
        <begin position="613"/>
        <end position="615"/>
    </location>
</feature>
<feature type="strand" evidence="19">
    <location>
        <begin position="622"/>
        <end position="627"/>
    </location>
</feature>
<feature type="strand" evidence="19">
    <location>
        <begin position="633"/>
        <end position="638"/>
    </location>
</feature>
<feature type="turn" evidence="19">
    <location>
        <begin position="639"/>
        <end position="642"/>
    </location>
</feature>
<feature type="strand" evidence="19">
    <location>
        <begin position="643"/>
        <end position="648"/>
    </location>
</feature>
<reference key="1">
    <citation type="journal article" date="2010" name="Proc. Natl. Acad. Sci. U.S.A.">
        <title>Insights into evolution of multicellular fungi from the assembled chromosomes of the mushroom Coprinopsis cinerea (Coprinus cinereus).</title>
        <authorList>
            <person name="Stajich J.E."/>
            <person name="Wilke S.K."/>
            <person name="Ahren D."/>
            <person name="Au C.H."/>
            <person name="Birren B.W."/>
            <person name="Borodovsky M."/>
            <person name="Burns C."/>
            <person name="Canbaeck B."/>
            <person name="Casselton L.A."/>
            <person name="Cheng C.K."/>
            <person name="Deng J."/>
            <person name="Dietrich F.S."/>
            <person name="Fargo D.C."/>
            <person name="Farman M.L."/>
            <person name="Gathman A.C."/>
            <person name="Goldberg J."/>
            <person name="Guigo R."/>
            <person name="Hoegger P.J."/>
            <person name="Hooker J.B."/>
            <person name="Huggins A."/>
            <person name="James T.Y."/>
            <person name="Kamada T."/>
            <person name="Kilaru S."/>
            <person name="Kodira C."/>
            <person name="Kuees U."/>
            <person name="Kupfer D."/>
            <person name="Kwan H.S."/>
            <person name="Lomsadze A."/>
            <person name="Li W."/>
            <person name="Lilly W.W."/>
            <person name="Ma L.-J."/>
            <person name="Mackey A.J."/>
            <person name="Manning G."/>
            <person name="Martin F."/>
            <person name="Muraguchi H."/>
            <person name="Natvig D.O."/>
            <person name="Palmerini H."/>
            <person name="Ramesh M.A."/>
            <person name="Rehmeyer C.J."/>
            <person name="Roe B.A."/>
            <person name="Shenoy N."/>
            <person name="Stanke M."/>
            <person name="Ter-Hovhannisyan V."/>
            <person name="Tunlid A."/>
            <person name="Velagapudi R."/>
            <person name="Vision T.J."/>
            <person name="Zeng Q."/>
            <person name="Zolan M.E."/>
            <person name="Pukkila P.J."/>
        </authorList>
    </citation>
    <scope>NUCLEOTIDE SEQUENCE [LARGE SCALE GENOMIC DNA]</scope>
    <source>
        <strain>Okayama-7 / 130 / ATCC MYA-4618 / FGSC 9003</strain>
    </source>
</reference>
<reference key="2">
    <citation type="journal article" date="2014" name="PLoS ONE">
        <title>Discovery of a eukaryotic pyrroloquinoline quinone-dependent oxidoreductase belonging to a new auxiliary activity family in the database of carbohydrate-active enzymes.</title>
        <authorList>
            <person name="Matsumura H."/>
            <person name="Umezawa K."/>
            <person name="Takeda K."/>
            <person name="Sugimoto N."/>
            <person name="Ishida T."/>
            <person name="Samejima M."/>
            <person name="Ohno H."/>
            <person name="Yoshida M."/>
            <person name="Igarashi K."/>
            <person name="Nakamura N."/>
        </authorList>
    </citation>
    <scope>FUNCTION</scope>
    <scope>SUBCELLULAR LOCATION</scope>
    <scope>CATALYTIC ACTIVITY</scope>
    <scope>BIOPHYSICOCHEMICAL PROPERTIES</scope>
    <scope>SUBSTRATE SPECIFICITY</scope>
    <scope>COFACTOR</scope>
</reference>
<reference key="3">
    <citation type="journal article" date="2015" name="PLoS ONE">
        <title>Characterization of a novel PQQ-dependent quinohemoprotein pyranose dehydrogenase from Coprinopsis cinerea classified into auxiliary activities family 12 in carbohydrate-active enzymes.</title>
        <authorList>
            <person name="Takeda K."/>
            <person name="Matsumura H."/>
            <person name="Ishida T."/>
            <person name="Samejima M."/>
            <person name="Ohno H."/>
            <person name="Yoshida M."/>
            <person name="Igarashi K."/>
            <person name="Nakamura N."/>
        </authorList>
    </citation>
    <scope>FUNCTION</scope>
    <scope>CATALYTIC ACTIVITY</scope>
    <scope>BIOPHYSICOCHEMICAL PROPERTIES</scope>
    <scope>SUBSTRATE SPECIFICITY</scope>
    <scope>DOMAIN</scope>
    <scope>BIOTECHNOLOGY</scope>
</reference>
<reference key="4">
    <citation type="journal article" date="2016" name="Biochem. Biophys. Res. Commun.">
        <title>pH-dependent electron transfer reaction and direct bioelectrocatalysis of the quinohemoprotein pyranose dehydrogenase.</title>
        <authorList>
            <person name="Takeda K."/>
            <person name="Matsumura H."/>
            <person name="Ishida T."/>
            <person name="Yoshida M."/>
            <person name="Igarashi K."/>
            <person name="Samejima M."/>
            <person name="Ohno H."/>
            <person name="Nakamura N."/>
        </authorList>
    </citation>
    <scope>FUNCTION</scope>
    <scope>CATALYTIC ACTIVITY</scope>
    <scope>BIOPHYSICOCHEMICAL PROPERTIES</scope>
    <scope>DOMAIN</scope>
</reference>
<reference key="5">
    <citation type="journal article" date="2018" name="Appl. Environ. Microbiol.">
        <title>The pyrroloquinoline-quinone-dependent p0yranose dehydrogenase from Coprinopsis cinerea drives lytic polysaccharide monooxygenase action.</title>
        <authorList>
            <person name="Varnai A."/>
            <person name="Umezawa K."/>
            <person name="Yoshida M."/>
            <person name="Eijsink V.G.H."/>
        </authorList>
    </citation>
    <scope>FUNCTION</scope>
    <scope>DOMAIN</scope>
</reference>
<reference key="6">
    <citation type="journal article" date="2021" name="Biosens. Bioelectron.">
        <title>An amperometric biosensor of L-fucose in urine for the first screening test of cancer.</title>
        <authorList>
            <person name="Takeda K."/>
            <person name="Kusuoka R."/>
            <person name="Inukai M."/>
            <person name="Igarashi K."/>
            <person name="Ohno H."/>
            <person name="Nakamura N."/>
        </authorList>
    </citation>
    <scope>BIOTECHNOLOGY</scope>
</reference>
<reference evidence="14 15 16" key="7">
    <citation type="journal article" date="2019" name="Appl. Environ. Microbiol.">
        <title>Crystal structure of the catalytic and cytochrome b domains in a eukaryotic pyrroloquinoline quinone-dependent dehydrogenase.</title>
        <authorList>
            <person name="Takeda K."/>
            <person name="Ishida T."/>
            <person name="Yoshida M."/>
            <person name="Samejima M."/>
            <person name="Ohno H."/>
            <person name="Igarashi K."/>
            <person name="Nakamura N."/>
        </authorList>
    </citation>
    <scope>X-RAY CRYSTALLOGRAPHY (1.30 ANGSTROMS) OF 240-649 IN COMPLEX WITH CA(2+); HEME B AND PYRROLOQUINOLINE QUINONE</scope>
    <scope>GLYCOSYLATION AT ASN-140 AND ASN-551</scope>
    <scope>DISULFIDE BONDS</scope>
    <scope>DOMAIN</scope>
</reference>
<organism>
    <name type="scientific">Coprinopsis cinerea (strain Okayama-7 / 130 / ATCC MYA-4618 / FGSC 9003)</name>
    <name type="common">Inky cap fungus</name>
    <name type="synonym">Hormographiella aspergillata</name>
    <dbReference type="NCBI Taxonomy" id="240176"/>
    <lineage>
        <taxon>Eukaryota</taxon>
        <taxon>Fungi</taxon>
        <taxon>Dikarya</taxon>
        <taxon>Basidiomycota</taxon>
        <taxon>Agaricomycotina</taxon>
        <taxon>Agaricomycetes</taxon>
        <taxon>Agaricomycetidae</taxon>
        <taxon>Agaricales</taxon>
        <taxon>Agaricineae</taxon>
        <taxon>Psathyrellaceae</taxon>
        <taxon>Coprinopsis</taxon>
    </lineage>
</organism>
<dbReference type="EC" id="1.1.99.-" evidence="5"/>
<dbReference type="EMBL" id="AACS02000006">
    <property type="protein sequence ID" value="EAU83856.1"/>
    <property type="molecule type" value="Genomic_DNA"/>
</dbReference>
<dbReference type="RefSeq" id="XP_001837974.1">
    <property type="nucleotide sequence ID" value="XM_001837922.1"/>
</dbReference>
<dbReference type="PDB" id="6JT5">
    <property type="method" value="X-ray"/>
    <property type="resolution" value="1.50 A"/>
    <property type="chains" value="A=240-649"/>
</dbReference>
<dbReference type="PDB" id="6JT6">
    <property type="method" value="X-ray"/>
    <property type="resolution" value="2.00 A"/>
    <property type="chains" value="A=19-215"/>
</dbReference>
<dbReference type="PDB" id="6JWF">
    <property type="method" value="X-ray"/>
    <property type="resolution" value="1.30 A"/>
    <property type="chains" value="A/B=240-649"/>
</dbReference>
<dbReference type="PDBsum" id="6JT5"/>
<dbReference type="PDBsum" id="6JT6"/>
<dbReference type="PDBsum" id="6JWF"/>
<dbReference type="SMR" id="A8P0V4"/>
<dbReference type="GeneID" id="6014539"/>
<dbReference type="KEGG" id="cci:CC1G_09525"/>
<dbReference type="VEuPathDB" id="FungiDB:CC1G_09525"/>
<dbReference type="eggNOG" id="ENOG502R9MT">
    <property type="taxonomic scope" value="Eukaryota"/>
</dbReference>
<dbReference type="InParanoid" id="A8P0V4"/>
<dbReference type="OMA" id="THWTVNA"/>
<dbReference type="OrthoDB" id="507128at2759"/>
<dbReference type="Proteomes" id="UP000001861">
    <property type="component" value="Unassembled WGS sequence"/>
</dbReference>
<dbReference type="GO" id="GO:0005576">
    <property type="term" value="C:extracellular region"/>
    <property type="evidence" value="ECO:0007669"/>
    <property type="project" value="UniProtKB-SubCell"/>
</dbReference>
<dbReference type="GO" id="GO:0030248">
    <property type="term" value="F:cellulose binding"/>
    <property type="evidence" value="ECO:0007669"/>
    <property type="project" value="InterPro"/>
</dbReference>
<dbReference type="GO" id="GO:0046872">
    <property type="term" value="F:metal ion binding"/>
    <property type="evidence" value="ECO:0007669"/>
    <property type="project" value="UniProtKB-KW"/>
</dbReference>
<dbReference type="GO" id="GO:0016491">
    <property type="term" value="F:oxidoreductase activity"/>
    <property type="evidence" value="ECO:0007669"/>
    <property type="project" value="UniProtKB-KW"/>
</dbReference>
<dbReference type="GO" id="GO:0005975">
    <property type="term" value="P:carbohydrate metabolic process"/>
    <property type="evidence" value="ECO:0007669"/>
    <property type="project" value="InterPro"/>
</dbReference>
<dbReference type="CDD" id="cd09630">
    <property type="entry name" value="CDH_like_cytochrome"/>
    <property type="match status" value="1"/>
</dbReference>
<dbReference type="Gene3D" id="2.60.40.1210">
    <property type="entry name" value="Cellobiose dehydrogenase, cytochrome domain"/>
    <property type="match status" value="1"/>
</dbReference>
<dbReference type="Gene3D" id="2.120.10.30">
    <property type="entry name" value="TolB, C-terminal domain"/>
    <property type="match status" value="1"/>
</dbReference>
<dbReference type="InterPro" id="IPR011042">
    <property type="entry name" value="6-blade_b-propeller_TolB-like"/>
</dbReference>
<dbReference type="InterPro" id="IPR035971">
    <property type="entry name" value="CBD_sf"/>
</dbReference>
<dbReference type="InterPro" id="IPR015920">
    <property type="entry name" value="Cellobiose_DH-like_cyt"/>
</dbReference>
<dbReference type="InterPro" id="IPR000254">
    <property type="entry name" value="Cellulose-bd_dom_fun"/>
</dbReference>
<dbReference type="InterPro" id="IPR005018">
    <property type="entry name" value="DOMON_domain"/>
</dbReference>
<dbReference type="InterPro" id="IPR054539">
    <property type="entry name" value="PDH_beta-prop"/>
</dbReference>
<dbReference type="InterPro" id="IPR011041">
    <property type="entry name" value="Quinoprot_gluc/sorb_DH_b-prop"/>
</dbReference>
<dbReference type="PANTHER" id="PTHR47797:SF5">
    <property type="entry name" value="CELLOBIOSE DEHYDROGENASE CYTOCHROME DOMAIN-CONTAINING PROTEIN"/>
    <property type="match status" value="1"/>
</dbReference>
<dbReference type="PANTHER" id="PTHR47797">
    <property type="entry name" value="DEHYDROGENASE, PUTATIVE (AFU_ORTHOLOGUE AFUA_8G05805)-RELATED"/>
    <property type="match status" value="1"/>
</dbReference>
<dbReference type="Pfam" id="PF00734">
    <property type="entry name" value="CBM_1"/>
    <property type="match status" value="1"/>
</dbReference>
<dbReference type="Pfam" id="PF16010">
    <property type="entry name" value="CDH-cyt"/>
    <property type="match status" value="1"/>
</dbReference>
<dbReference type="Pfam" id="PF22807">
    <property type="entry name" value="TrAA12"/>
    <property type="match status" value="1"/>
</dbReference>
<dbReference type="SMART" id="SM00664">
    <property type="entry name" value="DoH"/>
    <property type="match status" value="1"/>
</dbReference>
<dbReference type="SMART" id="SM00236">
    <property type="entry name" value="fCBD"/>
    <property type="match status" value="1"/>
</dbReference>
<dbReference type="SUPFAM" id="SSF49344">
    <property type="entry name" value="CBD9-like"/>
    <property type="match status" value="1"/>
</dbReference>
<dbReference type="SUPFAM" id="SSF57180">
    <property type="entry name" value="Cellulose-binding domain"/>
    <property type="match status" value="1"/>
</dbReference>
<dbReference type="SUPFAM" id="SSF50952">
    <property type="entry name" value="Soluble quinoprotein glucose dehydrogenase"/>
    <property type="match status" value="1"/>
</dbReference>
<dbReference type="PROSITE" id="PS00562">
    <property type="entry name" value="CBM1_1"/>
    <property type="match status" value="1"/>
</dbReference>
<dbReference type="PROSITE" id="PS51164">
    <property type="entry name" value="CBM1_2"/>
    <property type="match status" value="1"/>
</dbReference>
<gene>
    <name evidence="12" type="primary">PDH</name>
    <name evidence="11" type="synonym">SDH</name>
    <name type="ORF">CC1G_09525</name>
</gene>
<comment type="function">
    <text evidence="5 6 7 8">Pyrroloquinoline quinone (PPQ)-dependent oxidoreductase that catalyzes the oxidation of various sugars including L-galactose, L-gulose, D-talose, D-arabinose, D-lyxose, L-fucose and D-glucosone (PubMed:25121592, PubMed:25679509, PubMed:27338639). Shows significant activity toward the reverse-chair conformation of pyranoses (PubMed:25679509). Shows little or no activity toward abundant sugars such as D-glucose, D-fructose, cellobiose, as well L-xylose and L-glucose (PubMed:25121592, PubMed:25679509). This enzyme is able to direct electrical communication with electrodes, without artificial electron mediators, thus allowing direct electron transfer (DET)-type bioelectrocatalysis (PubMed:27338639). Exhibits binding affinity for insoluble cellulose (PubMed:25679509). PDH does not oxidize cello-oligosaccharides but is able to activate the C-1-oxidizing Neurospora crassa LPMO9F and the C-4-oxidizing Neurospora crassa LPMO9C thanks to the electron-tranfer activity of the cytochrome domain and the localization of PDH in the vicinity of the LPMO substrates by the CBM1 domain (PubMed:29602785).</text>
</comment>
<comment type="cofactor">
    <cofactor evidence="5 9">
        <name>Ca(2+)</name>
        <dbReference type="ChEBI" id="CHEBI:29108"/>
    </cofactor>
</comment>
<comment type="cofactor">
    <cofactor evidence="5 9">
        <name>pyrroloquinoline quinone</name>
        <dbReference type="ChEBI" id="CHEBI:58442"/>
    </cofactor>
</comment>
<comment type="cofactor">
    <cofactor evidence="9">
        <name>heme b</name>
        <dbReference type="ChEBI" id="CHEBI:60344"/>
    </cofactor>
</comment>
<comment type="biophysicochemical properties">
    <kinetics>
        <KM evidence="5 6">7.9 mM for D-glucosone</KM>
        <KM evidence="5 6">24.8 mM for L-fucose</KM>
        <KM evidence="5 6">30.3 mM for D-arabinose</KM>
        <KM evidence="5 6">84.7 mM for L-gulose</KM>
        <KM evidence="5 6">66.8 mM for D-lyxose</KM>
        <KM evidence="6">49.7 mM for L-galactose</KM>
        <KM evidence="6">23.1 mM for D-talose</KM>
        <KM evidence="6">236 mM for L-xylose</KM>
        <KM evidence="6">363 mM for L-glucose</KM>
        <KM evidence="7">3.3 mM for cytochrome c reduction at pH 6.0</KM>
        <KM evidence="7">6.1 mM for cytochrome c reduction at pH 8.5</KM>
    </kinetics>
    <phDependence>
        <text evidence="7">Optimum pH is 6.5 for phenazine methosulfate reduction and 8.5 for cytochrome c reduction.</text>
    </phDependence>
</comment>
<comment type="subcellular location">
    <subcellularLocation>
        <location evidence="5">Secreted</location>
    </subcellularLocation>
</comment>
<comment type="domain">
    <text evidence="9">PDH consists of three domains: an N-terminal cytochrome domain (found in AA8 family enzymes), a PQQ-dependent dehydrogenase domain in the middle of the sequence, and a C-terminal cellulose-binding domain classified as a member of the family 1 carbohydrate-binding module (CBM1).</text>
</comment>
<comment type="domain">
    <text evidence="6 7 8">The N-terminal cytochrome domain has an electron transfer function, i.e., intra- and inter-molecular electron transfer between the cytochrome domain and the catalytic domain and also Fe (III)-reducing ability (PubMed:25679509, PubMed:27338639). This function is essential to activate lytic polysaccharide monooxygenases (LPMOs) at the cell wall (PubMed:29602785).</text>
</comment>
<comment type="domain">
    <text evidence="8">The CBM1 domain binds cellulose and is essential to localize the electron transfer activity in the vicinity of the substrate of lytic polysaccharide monooxygenases (LPMOs) to activate them.</text>
</comment>
<comment type="biotechnology">
    <text evidence="6 10">AA12 family proteins are an attractive component of cellulolytic enzymes for use in biodegradation and biomass conversion or as an anode catalyst for bioelectrochemical applications (PubMed:25679509). Moreover, direct electron transfer (DET)-type bioelectrocatalysis of the PQQ domain from PDH has been used to create an amperometric L-fucose biosensor for the screening test of cancer using urine (PubMed:33288426).</text>
</comment>
<comment type="similarity">
    <text evidence="13">Belongs to the sugar dehydrogenase AA12 family.</text>
</comment>
<name>AA12_COPC7</name>
<keyword id="KW-0002">3D-structure</keyword>
<keyword id="KW-0106">Calcium</keyword>
<keyword id="KW-1015">Disulfide bond</keyword>
<keyword id="KW-0325">Glycoprotein</keyword>
<keyword id="KW-0349">Heme</keyword>
<keyword id="KW-0408">Iron</keyword>
<keyword id="KW-0479">Metal-binding</keyword>
<keyword id="KW-0560">Oxidoreductase</keyword>
<keyword id="KW-1185">Reference proteome</keyword>
<keyword id="KW-0964">Secreted</keyword>
<keyword id="KW-0732">Signal</keyword>
<protein>
    <recommendedName>
        <fullName evidence="12">Pyrroloquinoline quinone-dependent pyranose dehydrogenase</fullName>
        <shortName evidence="12">PDH</shortName>
        <ecNumber evidence="5">1.1.99.-</ecNumber>
    </recommendedName>
    <alternativeName>
        <fullName evidence="12">AA12 family sugar dehydrogenase</fullName>
    </alternativeName>
    <alternativeName>
        <fullName evidence="11">Pyrroloquinoline quinone-dependent sugar dehydrogenase</fullName>
        <shortName evidence="11">SDH</shortName>
    </alternativeName>
</protein>